<reference key="1">
    <citation type="journal article" date="2009" name="J. Toxicol. Environ. Health Part A">
        <title>Effects of BmKNJX11, a bioactive polypeptide purified from Buthus martensi Karsch, on sodium channels in rat dorsal root ganglion neurons.</title>
        <authorList>
            <person name="Wang X.J."/>
            <person name="An S.S."/>
            <person name="Cheng H."/>
            <person name="Xu S.H."/>
            <person name="Cheng J."/>
            <person name="Lu W."/>
            <person name="Gao R."/>
            <person name="Xiao H."/>
        </authorList>
    </citation>
    <scope>PROTEIN SEQUENCE</scope>
    <scope>FUNCTION</scope>
    <scope>MASS SPECTROMETRY</scope>
    <source>
        <tissue>Venom</tissue>
    </source>
</reference>
<evidence type="ECO:0000250" key="1"/>
<evidence type="ECO:0000255" key="2">
    <source>
        <dbReference type="PROSITE-ProRule" id="PRU01210"/>
    </source>
</evidence>
<evidence type="ECO:0000269" key="3">
    <source>
    </source>
</evidence>
<evidence type="ECO:0000305" key="4"/>
<comment type="function">
    <text evidence="3">Inhibits tetrodotoxin-sensitive voltage-gated sodium channels (TTX-S Nav) in rat dorsal root ganglion (DRG) neurons in a concentration- and voltage-dependent manner. Lowers the activation threshold and produces negative shifting of TTX-S sodium current activation curve. Induces shifting of the steady-state inactivation curve to the left, delays the recovery of TTX-S I(Na) from inactivation.</text>
</comment>
<comment type="subcellular location">
    <subcellularLocation>
        <location>Secreted</location>
    </subcellularLocation>
</comment>
<comment type="tissue specificity">
    <text>Expressed by the venom gland.</text>
</comment>
<comment type="domain">
    <text evidence="4">Has the structural arrangement of an alpha-helix connected to antiparallel beta-sheets by disulfide bonds (CS-alpha/beta).</text>
</comment>
<comment type="PTM">
    <text evidence="1">Contains 4 disulfide bonds.</text>
</comment>
<comment type="mass spectrometry"/>
<comment type="similarity">
    <text evidence="4">Belongs to the long (4 C-C) scorpion toxin superfamily. Sodium channel inhibitor family.</text>
</comment>
<feature type="chain" id="PRO_0000394020" description="Toxin BmKNJX11">
    <location>
        <begin position="1"/>
        <end position="15" status="greater than"/>
    </location>
</feature>
<feature type="domain" description="LCN-type CS-alpha/beta" evidence="2">
    <location>
        <begin position="2"/>
        <end position="15" status="greater than"/>
    </location>
</feature>
<feature type="non-terminal residue">
    <location>
        <position position="15"/>
    </location>
</feature>
<dbReference type="GO" id="GO:0005576">
    <property type="term" value="C:extracellular region"/>
    <property type="evidence" value="ECO:0007669"/>
    <property type="project" value="UniProtKB-SubCell"/>
</dbReference>
<dbReference type="GO" id="GO:0008200">
    <property type="term" value="F:ion channel inhibitor activity"/>
    <property type="evidence" value="ECO:0007669"/>
    <property type="project" value="InterPro"/>
</dbReference>
<dbReference type="GO" id="GO:0017080">
    <property type="term" value="F:sodium channel regulator activity"/>
    <property type="evidence" value="ECO:0007669"/>
    <property type="project" value="UniProtKB-KW"/>
</dbReference>
<dbReference type="GO" id="GO:0090729">
    <property type="term" value="F:toxin activity"/>
    <property type="evidence" value="ECO:0007669"/>
    <property type="project" value="UniProtKB-KW"/>
</dbReference>
<dbReference type="InterPro" id="IPR044062">
    <property type="entry name" value="LCN-type_CS_alpha_beta_dom"/>
</dbReference>
<dbReference type="PROSITE" id="PS51863">
    <property type="entry name" value="LCN_CSAB"/>
    <property type="match status" value="1"/>
</dbReference>
<proteinExistence type="evidence at protein level"/>
<organism>
    <name type="scientific">Olivierus martensii</name>
    <name type="common">Manchurian scorpion</name>
    <name type="synonym">Mesobuthus martensii</name>
    <dbReference type="NCBI Taxonomy" id="34649"/>
    <lineage>
        <taxon>Eukaryota</taxon>
        <taxon>Metazoa</taxon>
        <taxon>Ecdysozoa</taxon>
        <taxon>Arthropoda</taxon>
        <taxon>Chelicerata</taxon>
        <taxon>Arachnida</taxon>
        <taxon>Scorpiones</taxon>
        <taxon>Buthida</taxon>
        <taxon>Buthoidea</taxon>
        <taxon>Buthidae</taxon>
        <taxon>Olivierus</taxon>
    </lineage>
</organism>
<keyword id="KW-0903">Direct protein sequencing</keyword>
<keyword id="KW-1015">Disulfide bond</keyword>
<keyword id="KW-0872">Ion channel impairing toxin</keyword>
<keyword id="KW-0528">Neurotoxin</keyword>
<keyword id="KW-0964">Secreted</keyword>
<keyword id="KW-0800">Toxin</keyword>
<keyword id="KW-0738">Voltage-gated sodium channel impairing toxin</keyword>
<name>SCX11_OLIMR</name>
<protein>
    <recommendedName>
        <fullName>Toxin BmKNJX11</fullName>
    </recommendedName>
</protein>
<accession>P0CF76</accession>
<sequence>GRDAYIADSENCTYT</sequence>